<organism>
    <name type="scientific">Burkholderia cenocepacia (strain HI2424)</name>
    <dbReference type="NCBI Taxonomy" id="331272"/>
    <lineage>
        <taxon>Bacteria</taxon>
        <taxon>Pseudomonadati</taxon>
        <taxon>Pseudomonadota</taxon>
        <taxon>Betaproteobacteria</taxon>
        <taxon>Burkholderiales</taxon>
        <taxon>Burkholderiaceae</taxon>
        <taxon>Burkholderia</taxon>
        <taxon>Burkholderia cepacia complex</taxon>
    </lineage>
</organism>
<keyword id="KW-0963">Cytoplasm</keyword>
<keyword id="KW-0274">FAD</keyword>
<keyword id="KW-0285">Flavoprotein</keyword>
<keyword id="KW-0520">NAD</keyword>
<keyword id="KW-0819">tRNA processing</keyword>
<protein>
    <recommendedName>
        <fullName evidence="1">tRNA uridine 5-carboxymethylaminomethyl modification enzyme MnmG</fullName>
    </recommendedName>
    <alternativeName>
        <fullName evidence="1">Glucose-inhibited division protein A</fullName>
    </alternativeName>
</protein>
<dbReference type="EMBL" id="CP000458">
    <property type="protein sequence ID" value="ABK06847.1"/>
    <property type="molecule type" value="Genomic_DNA"/>
</dbReference>
<dbReference type="RefSeq" id="WP_011546806.1">
    <property type="nucleotide sequence ID" value="NC_008542.1"/>
</dbReference>
<dbReference type="SMR" id="A0K2X0"/>
<dbReference type="KEGG" id="bch:Bcen2424_0093"/>
<dbReference type="HOGENOM" id="CLU_007831_2_2_4"/>
<dbReference type="GO" id="GO:0005829">
    <property type="term" value="C:cytosol"/>
    <property type="evidence" value="ECO:0007669"/>
    <property type="project" value="TreeGrafter"/>
</dbReference>
<dbReference type="GO" id="GO:0050660">
    <property type="term" value="F:flavin adenine dinucleotide binding"/>
    <property type="evidence" value="ECO:0007669"/>
    <property type="project" value="UniProtKB-UniRule"/>
</dbReference>
<dbReference type="GO" id="GO:0030488">
    <property type="term" value="P:tRNA methylation"/>
    <property type="evidence" value="ECO:0007669"/>
    <property type="project" value="TreeGrafter"/>
</dbReference>
<dbReference type="GO" id="GO:0002098">
    <property type="term" value="P:tRNA wobble uridine modification"/>
    <property type="evidence" value="ECO:0007669"/>
    <property type="project" value="InterPro"/>
</dbReference>
<dbReference type="FunFam" id="1.10.10.1800:FF:000001">
    <property type="entry name" value="tRNA uridine 5-carboxymethylaminomethyl modification enzyme MnmG"/>
    <property type="match status" value="1"/>
</dbReference>
<dbReference type="FunFam" id="1.10.150.570:FF:000001">
    <property type="entry name" value="tRNA uridine 5-carboxymethylaminomethyl modification enzyme MnmG"/>
    <property type="match status" value="1"/>
</dbReference>
<dbReference type="FunFam" id="3.50.50.60:FF:000002">
    <property type="entry name" value="tRNA uridine 5-carboxymethylaminomethyl modification enzyme MnmG"/>
    <property type="match status" value="1"/>
</dbReference>
<dbReference type="FunFam" id="3.50.50.60:FF:000010">
    <property type="entry name" value="tRNA uridine 5-carboxymethylaminomethyl modification enzyme MnmG"/>
    <property type="match status" value="1"/>
</dbReference>
<dbReference type="Gene3D" id="3.50.50.60">
    <property type="entry name" value="FAD/NAD(P)-binding domain"/>
    <property type="match status" value="2"/>
</dbReference>
<dbReference type="Gene3D" id="1.10.150.570">
    <property type="entry name" value="GidA associated domain, C-terminal subdomain"/>
    <property type="match status" value="1"/>
</dbReference>
<dbReference type="Gene3D" id="1.10.10.1800">
    <property type="entry name" value="tRNA uridine 5-carboxymethylaminomethyl modification enzyme MnmG/GidA"/>
    <property type="match status" value="1"/>
</dbReference>
<dbReference type="HAMAP" id="MF_00129">
    <property type="entry name" value="MnmG_GidA"/>
    <property type="match status" value="1"/>
</dbReference>
<dbReference type="InterPro" id="IPR036188">
    <property type="entry name" value="FAD/NAD-bd_sf"/>
</dbReference>
<dbReference type="InterPro" id="IPR049312">
    <property type="entry name" value="GIDA_C_N"/>
</dbReference>
<dbReference type="InterPro" id="IPR004416">
    <property type="entry name" value="MnmG"/>
</dbReference>
<dbReference type="InterPro" id="IPR002218">
    <property type="entry name" value="MnmG-rel"/>
</dbReference>
<dbReference type="InterPro" id="IPR020595">
    <property type="entry name" value="MnmG-rel_CS"/>
</dbReference>
<dbReference type="InterPro" id="IPR026904">
    <property type="entry name" value="MnmG_C"/>
</dbReference>
<dbReference type="InterPro" id="IPR047001">
    <property type="entry name" value="MnmG_C_subdom"/>
</dbReference>
<dbReference type="InterPro" id="IPR044920">
    <property type="entry name" value="MnmG_C_subdom_sf"/>
</dbReference>
<dbReference type="InterPro" id="IPR040131">
    <property type="entry name" value="MnmG_N"/>
</dbReference>
<dbReference type="NCBIfam" id="TIGR00136">
    <property type="entry name" value="mnmG_gidA"/>
    <property type="match status" value="1"/>
</dbReference>
<dbReference type="PANTHER" id="PTHR11806">
    <property type="entry name" value="GLUCOSE INHIBITED DIVISION PROTEIN A"/>
    <property type="match status" value="1"/>
</dbReference>
<dbReference type="PANTHER" id="PTHR11806:SF0">
    <property type="entry name" value="PROTEIN MTO1 HOMOLOG, MITOCHONDRIAL"/>
    <property type="match status" value="1"/>
</dbReference>
<dbReference type="Pfam" id="PF01134">
    <property type="entry name" value="GIDA"/>
    <property type="match status" value="1"/>
</dbReference>
<dbReference type="Pfam" id="PF21680">
    <property type="entry name" value="GIDA_C_1st"/>
    <property type="match status" value="1"/>
</dbReference>
<dbReference type="Pfam" id="PF13932">
    <property type="entry name" value="SAM_GIDA_C"/>
    <property type="match status" value="1"/>
</dbReference>
<dbReference type="SMART" id="SM01228">
    <property type="entry name" value="GIDA_assoc_3"/>
    <property type="match status" value="1"/>
</dbReference>
<dbReference type="SUPFAM" id="SSF51905">
    <property type="entry name" value="FAD/NAD(P)-binding domain"/>
    <property type="match status" value="1"/>
</dbReference>
<dbReference type="PROSITE" id="PS01280">
    <property type="entry name" value="GIDA_1"/>
    <property type="match status" value="1"/>
</dbReference>
<dbReference type="PROSITE" id="PS01281">
    <property type="entry name" value="GIDA_2"/>
    <property type="match status" value="1"/>
</dbReference>
<gene>
    <name evidence="1" type="primary">mnmG</name>
    <name evidence="1" type="synonym">gidA</name>
    <name type="ordered locus">Bcen2424_0093</name>
</gene>
<proteinExistence type="inferred from homology"/>
<comment type="function">
    <text evidence="1">NAD-binding protein involved in the addition of a carboxymethylaminomethyl (cmnm) group at the wobble position (U34) of certain tRNAs, forming tRNA-cmnm(5)s(2)U34.</text>
</comment>
<comment type="cofactor">
    <cofactor evidence="1">
        <name>FAD</name>
        <dbReference type="ChEBI" id="CHEBI:57692"/>
    </cofactor>
</comment>
<comment type="subunit">
    <text evidence="1">Homodimer. Heterotetramer of two MnmE and two MnmG subunits.</text>
</comment>
<comment type="subcellular location">
    <subcellularLocation>
        <location evidence="1">Cytoplasm</location>
    </subcellularLocation>
</comment>
<comment type="similarity">
    <text evidence="1">Belongs to the MnmG family.</text>
</comment>
<accession>A0K2X0</accession>
<evidence type="ECO:0000255" key="1">
    <source>
        <dbReference type="HAMAP-Rule" id="MF_00129"/>
    </source>
</evidence>
<name>MNMG_BURCH</name>
<reference key="1">
    <citation type="submission" date="2006-08" db="EMBL/GenBank/DDBJ databases">
        <title>Complete sequence of chromosome 1 of Burkholderia cenocepacia HI2424.</title>
        <authorList>
            <person name="Copeland A."/>
            <person name="Lucas S."/>
            <person name="Lapidus A."/>
            <person name="Barry K."/>
            <person name="Detter J.C."/>
            <person name="Glavina del Rio T."/>
            <person name="Hammon N."/>
            <person name="Israni S."/>
            <person name="Pitluck S."/>
            <person name="Chain P."/>
            <person name="Malfatti S."/>
            <person name="Shin M."/>
            <person name="Vergez L."/>
            <person name="Schmutz J."/>
            <person name="Larimer F."/>
            <person name="Land M."/>
            <person name="Hauser L."/>
            <person name="Kyrpides N."/>
            <person name="Kim E."/>
            <person name="LiPuma J.J."/>
            <person name="Gonzalez C.F."/>
            <person name="Konstantinidis K."/>
            <person name="Tiedje J.M."/>
            <person name="Richardson P."/>
        </authorList>
    </citation>
    <scope>NUCLEOTIDE SEQUENCE [LARGE SCALE GENOMIC DNA]</scope>
    <source>
        <strain>HI2424</strain>
    </source>
</reference>
<feature type="chain" id="PRO_1000016561" description="tRNA uridine 5-carboxymethylaminomethyl modification enzyme MnmG">
    <location>
        <begin position="1"/>
        <end position="656"/>
    </location>
</feature>
<feature type="binding site" evidence="1">
    <location>
        <begin position="13"/>
        <end position="18"/>
    </location>
    <ligand>
        <name>FAD</name>
        <dbReference type="ChEBI" id="CHEBI:57692"/>
    </ligand>
</feature>
<feature type="binding site" evidence="1">
    <location>
        <begin position="274"/>
        <end position="288"/>
    </location>
    <ligand>
        <name>NAD(+)</name>
        <dbReference type="ChEBI" id="CHEBI:57540"/>
    </ligand>
</feature>
<sequence length="656" mass="71927">MLFPTEFDVIVVGGGHAGTEAALASARMGAKTLLLTHNIETLGQMSCNPSIGGIGKGHLVKEVDALGGAMAAATDESGIQFRILNSSKGPAVRATRAQADRILYKAAIRHRLENQPNLWLFQQAVDDLMVEGDRVVGAVTQIGIRFRARAVVLTAGTFLDGKIHVGLNNYTGGRAGDPAAVSLSSRLKELKLPQGRLKTGTPPRIDGRTIDFSKLDEQPGDLDPIPVFSFLGRADQHPQQLPCWVTHTNERTHDIIRGGLDRSPMYTGVIEGVGPRYCPSIEDKIHRFASKESHQIFLEPEGLTTHEFYPNGISTSLPFDVQLELVHSMRGLENAHILRPGYAIEYDYFDPRALKASLETKAINGLFFAGQINGTTGYEEAAAQGLLAGLNAGRYVQEKDAWCPRRDQAYLGVLVDDLVTRGVAEPYRMFTSRAEYRLSLREDNADMRLTEIGRELGLVDDARWDAFSRKRDAVSRETERLKSTWVTPKTLPVEEATALLGKAIDHEYSLAELLRRPGVSYDGVCGLKGGECGPAEPLADDPVLLEQIKEQVEIGIKYQGYIERQASEIERNDANENTRLPDGIDYREVRGLSFEVSQKLNEFRPETIGQASRISGVTPAAISLLMVHLKRRGLGRRNGTAAEAAEQGDGAVPTQQ</sequence>